<name>DNAG_RICFE</name>
<dbReference type="EC" id="2.7.7.101" evidence="1"/>
<dbReference type="EMBL" id="CP000053">
    <property type="protein sequence ID" value="AAY62209.1"/>
    <property type="molecule type" value="Genomic_DNA"/>
</dbReference>
<dbReference type="SMR" id="Q4UJT0"/>
<dbReference type="STRING" id="315456.RF_1358"/>
<dbReference type="KEGG" id="rfe:RF_1358"/>
<dbReference type="eggNOG" id="COG0358">
    <property type="taxonomic scope" value="Bacteria"/>
</dbReference>
<dbReference type="HOGENOM" id="CLU_013501_5_3_5"/>
<dbReference type="OrthoDB" id="9803773at2"/>
<dbReference type="Proteomes" id="UP000008548">
    <property type="component" value="Chromosome"/>
</dbReference>
<dbReference type="GO" id="GO:0005737">
    <property type="term" value="C:cytoplasm"/>
    <property type="evidence" value="ECO:0007669"/>
    <property type="project" value="TreeGrafter"/>
</dbReference>
<dbReference type="GO" id="GO:0000428">
    <property type="term" value="C:DNA-directed RNA polymerase complex"/>
    <property type="evidence" value="ECO:0007669"/>
    <property type="project" value="UniProtKB-KW"/>
</dbReference>
<dbReference type="GO" id="GO:1990077">
    <property type="term" value="C:primosome complex"/>
    <property type="evidence" value="ECO:0007669"/>
    <property type="project" value="UniProtKB-KW"/>
</dbReference>
<dbReference type="GO" id="GO:0003677">
    <property type="term" value="F:DNA binding"/>
    <property type="evidence" value="ECO:0007669"/>
    <property type="project" value="UniProtKB-KW"/>
</dbReference>
<dbReference type="GO" id="GO:0003899">
    <property type="term" value="F:DNA-directed RNA polymerase activity"/>
    <property type="evidence" value="ECO:0007669"/>
    <property type="project" value="InterPro"/>
</dbReference>
<dbReference type="GO" id="GO:0008270">
    <property type="term" value="F:zinc ion binding"/>
    <property type="evidence" value="ECO:0007669"/>
    <property type="project" value="UniProtKB-UniRule"/>
</dbReference>
<dbReference type="GO" id="GO:0006269">
    <property type="term" value="P:DNA replication, synthesis of primer"/>
    <property type="evidence" value="ECO:0007669"/>
    <property type="project" value="UniProtKB-UniRule"/>
</dbReference>
<dbReference type="CDD" id="cd03364">
    <property type="entry name" value="TOPRIM_DnaG_primases"/>
    <property type="match status" value="1"/>
</dbReference>
<dbReference type="FunFam" id="3.40.1360.10:FF:000002">
    <property type="entry name" value="DNA primase"/>
    <property type="match status" value="1"/>
</dbReference>
<dbReference type="FunFam" id="3.90.580.10:FF:000001">
    <property type="entry name" value="DNA primase"/>
    <property type="match status" value="1"/>
</dbReference>
<dbReference type="Gene3D" id="3.40.1360.10">
    <property type="match status" value="1"/>
</dbReference>
<dbReference type="Gene3D" id="3.90.980.10">
    <property type="entry name" value="DNA primase, catalytic core, N-terminal domain"/>
    <property type="match status" value="1"/>
</dbReference>
<dbReference type="Gene3D" id="3.90.580.10">
    <property type="entry name" value="Zinc finger, CHC2-type domain"/>
    <property type="match status" value="1"/>
</dbReference>
<dbReference type="HAMAP" id="MF_00974">
    <property type="entry name" value="DNA_primase_DnaG"/>
    <property type="match status" value="1"/>
</dbReference>
<dbReference type="InterPro" id="IPR037068">
    <property type="entry name" value="DNA_primase_core_N_sf"/>
</dbReference>
<dbReference type="InterPro" id="IPR006295">
    <property type="entry name" value="DNA_primase_DnaG"/>
</dbReference>
<dbReference type="InterPro" id="IPR036977">
    <property type="entry name" value="DNA_primase_Znf_CHC2"/>
</dbReference>
<dbReference type="InterPro" id="IPR030846">
    <property type="entry name" value="DnaG_bac"/>
</dbReference>
<dbReference type="InterPro" id="IPR013264">
    <property type="entry name" value="DNAG_N"/>
</dbReference>
<dbReference type="InterPro" id="IPR050219">
    <property type="entry name" value="DnaG_primase"/>
</dbReference>
<dbReference type="InterPro" id="IPR034151">
    <property type="entry name" value="TOPRIM_DnaG_bac"/>
</dbReference>
<dbReference type="InterPro" id="IPR006171">
    <property type="entry name" value="TOPRIM_dom"/>
</dbReference>
<dbReference type="InterPro" id="IPR002694">
    <property type="entry name" value="Znf_CHC2"/>
</dbReference>
<dbReference type="NCBIfam" id="TIGR01391">
    <property type="entry name" value="dnaG"/>
    <property type="match status" value="1"/>
</dbReference>
<dbReference type="PANTHER" id="PTHR30313">
    <property type="entry name" value="DNA PRIMASE"/>
    <property type="match status" value="1"/>
</dbReference>
<dbReference type="PANTHER" id="PTHR30313:SF2">
    <property type="entry name" value="DNA PRIMASE"/>
    <property type="match status" value="1"/>
</dbReference>
<dbReference type="Pfam" id="PF08275">
    <property type="entry name" value="DNAG_N"/>
    <property type="match status" value="1"/>
</dbReference>
<dbReference type="Pfam" id="PF13155">
    <property type="entry name" value="Toprim_2"/>
    <property type="match status" value="1"/>
</dbReference>
<dbReference type="Pfam" id="PF01807">
    <property type="entry name" value="Zn_ribbon_DnaG"/>
    <property type="match status" value="1"/>
</dbReference>
<dbReference type="PIRSF" id="PIRSF002811">
    <property type="entry name" value="DnaG"/>
    <property type="match status" value="1"/>
</dbReference>
<dbReference type="SMART" id="SM00493">
    <property type="entry name" value="TOPRIM"/>
    <property type="match status" value="1"/>
</dbReference>
<dbReference type="SMART" id="SM00400">
    <property type="entry name" value="ZnF_CHCC"/>
    <property type="match status" value="1"/>
</dbReference>
<dbReference type="SUPFAM" id="SSF56731">
    <property type="entry name" value="DNA primase core"/>
    <property type="match status" value="1"/>
</dbReference>
<dbReference type="SUPFAM" id="SSF57783">
    <property type="entry name" value="Zinc beta-ribbon"/>
    <property type="match status" value="1"/>
</dbReference>
<dbReference type="PROSITE" id="PS50880">
    <property type="entry name" value="TOPRIM"/>
    <property type="match status" value="1"/>
</dbReference>
<feature type="chain" id="PRO_0000280943" description="DNA primase">
    <location>
        <begin position="1"/>
        <end position="595"/>
    </location>
</feature>
<feature type="domain" description="Toprim" evidence="1">
    <location>
        <begin position="250"/>
        <end position="332"/>
    </location>
</feature>
<feature type="zinc finger region" description="CHC2-type" evidence="1">
    <location>
        <begin position="38"/>
        <end position="62"/>
    </location>
</feature>
<feature type="binding site" evidence="1">
    <location>
        <position position="256"/>
    </location>
    <ligand>
        <name>Mg(2+)</name>
        <dbReference type="ChEBI" id="CHEBI:18420"/>
        <label>1</label>
        <note>catalytic</note>
    </ligand>
</feature>
<feature type="binding site" evidence="1">
    <location>
        <position position="300"/>
    </location>
    <ligand>
        <name>Mg(2+)</name>
        <dbReference type="ChEBI" id="CHEBI:18420"/>
        <label>1</label>
        <note>catalytic</note>
    </ligand>
</feature>
<feature type="binding site" evidence="1">
    <location>
        <position position="300"/>
    </location>
    <ligand>
        <name>Mg(2+)</name>
        <dbReference type="ChEBI" id="CHEBI:18420"/>
        <label>2</label>
    </ligand>
</feature>
<feature type="binding site" evidence="1">
    <location>
        <position position="302"/>
    </location>
    <ligand>
        <name>Mg(2+)</name>
        <dbReference type="ChEBI" id="CHEBI:18420"/>
        <label>2</label>
    </ligand>
</feature>
<proteinExistence type="inferred from homology"/>
<protein>
    <recommendedName>
        <fullName evidence="1">DNA primase</fullName>
        <ecNumber evidence="1">2.7.7.101</ecNumber>
    </recommendedName>
</protein>
<reference key="1">
    <citation type="journal article" date="2005" name="PLoS Biol.">
        <title>The genome sequence of Rickettsia felis identifies the first putative conjugative plasmid in an obligate intracellular parasite.</title>
        <authorList>
            <person name="Ogata H."/>
            <person name="Renesto P."/>
            <person name="Audic S."/>
            <person name="Robert C."/>
            <person name="Blanc G."/>
            <person name="Fournier P.-E."/>
            <person name="Parinello H."/>
            <person name="Claverie J.-M."/>
            <person name="Raoult D."/>
        </authorList>
    </citation>
    <scope>NUCLEOTIDE SEQUENCE [LARGE SCALE GENOMIC DNA]</scope>
    <source>
        <strain>ATCC VR-1525 / URRWXCal2</strain>
    </source>
</reference>
<evidence type="ECO:0000255" key="1">
    <source>
        <dbReference type="HAMAP-Rule" id="MF_00974"/>
    </source>
</evidence>
<sequence length="595" mass="68399">MRVAPEFYELLRNRINISDVVRQKVALTRKSGNYVGLCPFHQEKTPSFTVSDSKRFFYCFGCKAAGDVIKFTSNISGLSYNESAIKLATDYGIEIPKLTAKQKEFYEESDEILNILELANKFFRTQLTPEILNYLHERGITEETVKEFSIGFAPKNNKFEKFFHDKNIDIIKLGKAGLIGKRENGEIYNLFSNRITIPIRNIYNKIVGFGGRVLGEGLPKYLNSPETTVFQKSETLYGEHKAISSSYKKNHSILVEGYFDVIALHQAGFSEAVASLGTSVTENHLHKLWRAGDEIILCLDGDNAGIKASIRTINLALPLINSEKKISFIRLPNGLDPDDAVNKNGADFFAKLIDKRISLSEMIWHIEYSGKSFKTAEEKANLEKNLKDYCSKISDSNLKASYYRFFKEQIWQNLVTKQKKATTKNSNLAPIISSHGYSELEMLEHAFCALLVKFPIILEEKDIRDFILNLNFNNKSLEEFRNWYLNEIIDNNVEASEITAIVEKTSFFDIFLLLSKTDNLFLDISFNKNNIRLDLLWQWLHKKYYLINLQQEYSITINSTDNHDFEKVLLYKKEILKIANELQVLNESFINHTIT</sequence>
<accession>Q4UJT0</accession>
<gene>
    <name evidence="1" type="primary">dnaG</name>
    <name type="ordered locus">RF_1358</name>
</gene>
<comment type="function">
    <text evidence="1">RNA polymerase that catalyzes the synthesis of short RNA molecules used as primers for DNA polymerase during DNA replication.</text>
</comment>
<comment type="catalytic activity">
    <reaction evidence="1">
        <text>ssDNA + n NTP = ssDNA/pppN(pN)n-1 hybrid + (n-1) diphosphate.</text>
        <dbReference type="EC" id="2.7.7.101"/>
    </reaction>
</comment>
<comment type="cofactor">
    <cofactor evidence="1">
        <name>Zn(2+)</name>
        <dbReference type="ChEBI" id="CHEBI:29105"/>
    </cofactor>
    <text evidence="1">Binds 1 zinc ion per monomer.</text>
</comment>
<comment type="cofactor">
    <cofactor evidence="1">
        <name>Mg(2+)</name>
        <dbReference type="ChEBI" id="CHEBI:18420"/>
    </cofactor>
    <text evidence="1">Binds two Mg(2+) per subunit.</text>
</comment>
<comment type="subunit">
    <text evidence="1">Monomer. Interacts with DnaB.</text>
</comment>
<comment type="domain">
    <text evidence="1">Contains an N-terminal zinc-binding domain, a central core domain that contains the primase activity, and a C-terminal DnaB-binding domain.</text>
</comment>
<comment type="similarity">
    <text evidence="1">Belongs to the DnaG primase family.</text>
</comment>
<organism>
    <name type="scientific">Rickettsia felis (strain ATCC VR-1525 / URRWXCal2)</name>
    <name type="common">Rickettsia azadi</name>
    <dbReference type="NCBI Taxonomy" id="315456"/>
    <lineage>
        <taxon>Bacteria</taxon>
        <taxon>Pseudomonadati</taxon>
        <taxon>Pseudomonadota</taxon>
        <taxon>Alphaproteobacteria</taxon>
        <taxon>Rickettsiales</taxon>
        <taxon>Rickettsiaceae</taxon>
        <taxon>Rickettsieae</taxon>
        <taxon>Rickettsia</taxon>
        <taxon>spotted fever group</taxon>
    </lineage>
</organism>
<keyword id="KW-0235">DNA replication</keyword>
<keyword id="KW-0238">DNA-binding</keyword>
<keyword id="KW-0240">DNA-directed RNA polymerase</keyword>
<keyword id="KW-0460">Magnesium</keyword>
<keyword id="KW-0479">Metal-binding</keyword>
<keyword id="KW-0548">Nucleotidyltransferase</keyword>
<keyword id="KW-0639">Primosome</keyword>
<keyword id="KW-0804">Transcription</keyword>
<keyword id="KW-0808">Transferase</keyword>
<keyword id="KW-0862">Zinc</keyword>
<keyword id="KW-0863">Zinc-finger</keyword>